<organism>
    <name type="scientific">Campylobacter jejuni subsp. jejuni serotype O:23/36 (strain 81-176)</name>
    <dbReference type="NCBI Taxonomy" id="354242"/>
    <lineage>
        <taxon>Bacteria</taxon>
        <taxon>Pseudomonadati</taxon>
        <taxon>Campylobacterota</taxon>
        <taxon>Epsilonproteobacteria</taxon>
        <taxon>Campylobacterales</taxon>
        <taxon>Campylobacteraceae</taxon>
        <taxon>Campylobacter</taxon>
    </lineage>
</organism>
<sequence>MNFQPLGKRVLVKRVEETKTTASGIIIPDNAKEKPLMGEVVAVSKEITDIANGDKIVFAKYGGTEIKLDNNEYLVLNLDDILGILK</sequence>
<comment type="function">
    <text evidence="1">Together with the chaperonin GroEL, plays an essential role in assisting protein folding. The GroEL-GroES system forms a nano-cage that allows encapsulation of the non-native substrate proteins and provides a physical environment optimized to promote and accelerate protein folding. GroES binds to the apical surface of the GroEL ring, thereby capping the opening of the GroEL channel.</text>
</comment>
<comment type="subunit">
    <text evidence="1">Heptamer of 7 subunits arranged in a ring. Interacts with the chaperonin GroEL.</text>
</comment>
<comment type="subcellular location">
    <subcellularLocation>
        <location evidence="1">Cytoplasm</location>
    </subcellularLocation>
</comment>
<comment type="similarity">
    <text evidence="1">Belongs to the GroES chaperonin family.</text>
</comment>
<name>CH10_CAMJJ</name>
<accession>A1W0K3</accession>
<proteinExistence type="inferred from homology"/>
<evidence type="ECO:0000255" key="1">
    <source>
        <dbReference type="HAMAP-Rule" id="MF_00580"/>
    </source>
</evidence>
<reference key="1">
    <citation type="submission" date="2006-12" db="EMBL/GenBank/DDBJ databases">
        <authorList>
            <person name="Fouts D.E."/>
            <person name="Nelson K.E."/>
            <person name="Sebastian Y."/>
        </authorList>
    </citation>
    <scope>NUCLEOTIDE SEQUENCE [LARGE SCALE GENOMIC DNA]</scope>
    <source>
        <strain>81-176</strain>
    </source>
</reference>
<protein>
    <recommendedName>
        <fullName evidence="1">Co-chaperonin GroES</fullName>
    </recommendedName>
    <alternativeName>
        <fullName evidence="1">10 kDa chaperonin</fullName>
    </alternativeName>
    <alternativeName>
        <fullName evidence="1">Chaperonin-10</fullName>
        <shortName evidence="1">Cpn10</shortName>
    </alternativeName>
</protein>
<keyword id="KW-0143">Chaperone</keyword>
<keyword id="KW-0963">Cytoplasm</keyword>
<dbReference type="EMBL" id="CP000538">
    <property type="protein sequence ID" value="EAQ72237.2"/>
    <property type="molecule type" value="Genomic_DNA"/>
</dbReference>
<dbReference type="RefSeq" id="WP_002825273.1">
    <property type="nucleotide sequence ID" value="NC_008787.1"/>
</dbReference>
<dbReference type="SMR" id="A1W0K3"/>
<dbReference type="KEGG" id="cjj:CJJ81176_1233"/>
<dbReference type="eggNOG" id="COG0234">
    <property type="taxonomic scope" value="Bacteria"/>
</dbReference>
<dbReference type="HOGENOM" id="CLU_132825_2_0_7"/>
<dbReference type="Proteomes" id="UP000000646">
    <property type="component" value="Chromosome"/>
</dbReference>
<dbReference type="GO" id="GO:0005737">
    <property type="term" value="C:cytoplasm"/>
    <property type="evidence" value="ECO:0007669"/>
    <property type="project" value="UniProtKB-SubCell"/>
</dbReference>
<dbReference type="GO" id="GO:0005524">
    <property type="term" value="F:ATP binding"/>
    <property type="evidence" value="ECO:0007669"/>
    <property type="project" value="InterPro"/>
</dbReference>
<dbReference type="GO" id="GO:0046872">
    <property type="term" value="F:metal ion binding"/>
    <property type="evidence" value="ECO:0007669"/>
    <property type="project" value="TreeGrafter"/>
</dbReference>
<dbReference type="GO" id="GO:0044183">
    <property type="term" value="F:protein folding chaperone"/>
    <property type="evidence" value="ECO:0007669"/>
    <property type="project" value="InterPro"/>
</dbReference>
<dbReference type="GO" id="GO:0051087">
    <property type="term" value="F:protein-folding chaperone binding"/>
    <property type="evidence" value="ECO:0007669"/>
    <property type="project" value="TreeGrafter"/>
</dbReference>
<dbReference type="GO" id="GO:0051082">
    <property type="term" value="F:unfolded protein binding"/>
    <property type="evidence" value="ECO:0007669"/>
    <property type="project" value="TreeGrafter"/>
</dbReference>
<dbReference type="GO" id="GO:0051085">
    <property type="term" value="P:chaperone cofactor-dependent protein refolding"/>
    <property type="evidence" value="ECO:0007669"/>
    <property type="project" value="TreeGrafter"/>
</dbReference>
<dbReference type="CDD" id="cd00320">
    <property type="entry name" value="cpn10"/>
    <property type="match status" value="1"/>
</dbReference>
<dbReference type="FunFam" id="2.30.33.40:FF:000001">
    <property type="entry name" value="10 kDa chaperonin"/>
    <property type="match status" value="1"/>
</dbReference>
<dbReference type="Gene3D" id="2.30.33.40">
    <property type="entry name" value="GroES chaperonin"/>
    <property type="match status" value="1"/>
</dbReference>
<dbReference type="HAMAP" id="MF_00580">
    <property type="entry name" value="CH10"/>
    <property type="match status" value="1"/>
</dbReference>
<dbReference type="InterPro" id="IPR020818">
    <property type="entry name" value="Chaperonin_GroES"/>
</dbReference>
<dbReference type="InterPro" id="IPR037124">
    <property type="entry name" value="Chaperonin_GroES_sf"/>
</dbReference>
<dbReference type="InterPro" id="IPR011032">
    <property type="entry name" value="GroES-like_sf"/>
</dbReference>
<dbReference type="NCBIfam" id="NF001537">
    <property type="entry name" value="PRK00364.3-3"/>
    <property type="match status" value="1"/>
</dbReference>
<dbReference type="PANTHER" id="PTHR10772">
    <property type="entry name" value="10 KDA HEAT SHOCK PROTEIN"/>
    <property type="match status" value="1"/>
</dbReference>
<dbReference type="PANTHER" id="PTHR10772:SF58">
    <property type="entry name" value="CO-CHAPERONIN GROES"/>
    <property type="match status" value="1"/>
</dbReference>
<dbReference type="Pfam" id="PF00166">
    <property type="entry name" value="Cpn10"/>
    <property type="match status" value="1"/>
</dbReference>
<dbReference type="PRINTS" id="PR00297">
    <property type="entry name" value="CHAPERONIN10"/>
</dbReference>
<dbReference type="SMART" id="SM00883">
    <property type="entry name" value="Cpn10"/>
    <property type="match status" value="1"/>
</dbReference>
<dbReference type="SUPFAM" id="SSF50129">
    <property type="entry name" value="GroES-like"/>
    <property type="match status" value="1"/>
</dbReference>
<feature type="chain" id="PRO_1000025231" description="Co-chaperonin GroES">
    <location>
        <begin position="1"/>
        <end position="86"/>
    </location>
</feature>
<gene>
    <name evidence="1" type="primary">groES</name>
    <name evidence="1" type="synonym">groS</name>
    <name type="ordered locus">CJJ81176_1233</name>
</gene>